<comment type="function">
    <text evidence="1">Catalytic component of the RAG complex, a multiprotein complex that mediates the DNA cleavage phase during V(D)J recombination. V(D)J recombination assembles a diverse repertoire of immunoglobulin and T-cell receptor genes in developing B and T-lymphocytes through rearrangement of different V (variable), in some cases D (diversity), and J (joining) gene segments. In the RAG complex, RAG1 mediates the DNA-binding to the conserved recombination signal sequences (RSS) and catalyzes the DNA cleavage activities by introducing a double-strand break between the RSS and the adjacent coding segment. RAG2 is not a catalytic component but is required for all known catalytic activities. DNA cleavage occurs in 2 steps: a first nick is introduced in the top strand immediately upstream of the heptamer, generating a 3'-hydroxyl group that can attack the phosphodiester bond on the opposite strand in a direct transesterification reaction, thereby creating 4 DNA ends: 2 hairpin coding ends and 2 blunt, 5'-phosphorylated ends. The chromatin structure plays an essential role in the V(D)J recombination reactions and the presence of histone H3 trimethylated at 'Lys-4' (H3K4me3) stimulates both the nicking and haipinning steps. The RAG complex also plays a role in pre-B cell allelic exclusion, a process leading to expression of a single immunoglobulin heavy chain allele to enforce clonality and monospecific recognition by the B-cell antigen receptor (BCR) expressed on individual B-lymphocytes. The introduction of DNA breaks by the RAG complex on one immunoglobulin allele induces ATM-dependent repositioning of the other allele to pericentromeric heterochromatin, preventing accessibility to the RAG complex and recombination of the second allele. In addition to its endonuclease activity, RAG1 also acts as an E3 ubiquitin-protein ligase that mediates monoubiquitination of histone H3. Histone H3 monoubiquitination is required for the joining step of V(D)J recombination. Mediates polyubiquitination of KPNA1 (By similarity).</text>
</comment>
<comment type="catalytic activity">
    <reaction>
        <text>S-ubiquitinyl-[E2 ubiquitin-conjugating enzyme]-L-cysteine + [acceptor protein]-L-lysine = [E2 ubiquitin-conjugating enzyme]-L-cysteine + N(6)-ubiquitinyl-[acceptor protein]-L-lysine.</text>
        <dbReference type="EC" id="2.3.2.27"/>
    </reaction>
</comment>
<comment type="cofactor">
    <cofactor evidence="1">
        <name>Mg(2+)</name>
        <dbReference type="ChEBI" id="CHEBI:18420"/>
    </cofactor>
    <cofactor evidence="1">
        <name>Mn(2+)</name>
        <dbReference type="ChEBI" id="CHEBI:29035"/>
    </cofactor>
    <text evidence="1">Binds 1 divalent metal cation per subunit. Mg(2+) or Mn(2+).</text>
</comment>
<comment type="subunit">
    <text evidence="1">Homodimer. Component of the RAG complex composed of core components RAG1 and RAG2, and associated component HMGB1 or HMGB2. Interacts with DCAF1, leading to recruitment of the CUL4A-RBX1-DDB1-DCAF1/VPRBP complex to ubiquitinate proteins and limit error-prone repair during V(D)J recombination (By similarity).</text>
</comment>
<comment type="subcellular location">
    <subcellularLocation>
        <location evidence="4">Nucleus</location>
    </subcellularLocation>
</comment>
<comment type="domain">
    <text evidence="1">The RING-type zinc finger mediates the E3 ubiquitin-protein ligase activity.</text>
</comment>
<comment type="domain">
    <text evidence="4">The NBD (nonamer binding) DNA-binding domain mediates the specific binding to the nonamer RSS motif by forming a tightly interwoven homodimer that binds and synapses 2 nonamer elements, with each NBD making contact with both DNA molecules. Each RSS is composed of well-conserved heptamer (consensus 5'-CACAGTG-3') and nonamer (consensus 5'-ACAAAAACC-3') sequences separated by a spacer of either 12 bp or 23 bp.</text>
</comment>
<comment type="PTM">
    <text evidence="1">Autoubiquitinated in the presence of CDC34/UBCH3.</text>
</comment>
<comment type="similarity">
    <text evidence="4">Belongs to the RAG1 family.</text>
</comment>
<feature type="chain" id="PRO_0000056006" description="V(D)J recombination-activating protein 1">
    <location>
        <begin position="1"/>
        <end position="1043"/>
    </location>
</feature>
<feature type="zinc finger region" description="RING-type" evidence="3">
    <location>
        <begin position="293"/>
        <end position="332"/>
    </location>
</feature>
<feature type="zinc finger region" description="RAG1-type" evidence="5">
    <location>
        <begin position="354"/>
        <end position="383"/>
    </location>
</feature>
<feature type="DNA-binding region" description="NBD" evidence="4">
    <location>
        <begin position="392"/>
        <end position="459"/>
    </location>
</feature>
<feature type="region of interest" description="Disordered" evidence="6">
    <location>
        <begin position="39"/>
        <end position="98"/>
    </location>
</feature>
<feature type="compositionally biased region" description="Basic and acidic residues" evidence="6">
    <location>
        <begin position="39"/>
        <end position="54"/>
    </location>
</feature>
<feature type="compositionally biased region" description="Basic and acidic residues" evidence="6">
    <location>
        <begin position="87"/>
        <end position="98"/>
    </location>
</feature>
<feature type="binding site" evidence="1">
    <location>
        <position position="269"/>
    </location>
    <ligand>
        <name>Zn(2+)</name>
        <dbReference type="ChEBI" id="CHEBI:29105"/>
        <label>1</label>
    </ligand>
</feature>
<feature type="binding site" evidence="1">
    <location>
        <position position="273"/>
    </location>
    <ligand>
        <name>Zn(2+)</name>
        <dbReference type="ChEBI" id="CHEBI:29105"/>
        <label>1</label>
    </ligand>
</feature>
<feature type="binding site" evidence="1">
    <location>
        <position position="293"/>
    </location>
    <ligand>
        <name>Zn(2+)</name>
        <dbReference type="ChEBI" id="CHEBI:29105"/>
        <label>2</label>
    </ligand>
</feature>
<feature type="binding site" evidence="1">
    <location>
        <position position="296"/>
    </location>
    <ligand>
        <name>Zn(2+)</name>
        <dbReference type="ChEBI" id="CHEBI:29105"/>
        <label>1</label>
    </ligand>
</feature>
<feature type="binding site" evidence="1">
    <location>
        <position position="296"/>
    </location>
    <ligand>
        <name>Zn(2+)</name>
        <dbReference type="ChEBI" id="CHEBI:29105"/>
        <label>2</label>
    </ligand>
</feature>
<feature type="binding site" evidence="1">
    <location>
        <position position="298"/>
    </location>
    <ligand>
        <name>Zn(2+)</name>
        <dbReference type="ChEBI" id="CHEBI:29105"/>
        <label>1</label>
    </ligand>
</feature>
<feature type="binding site" evidence="1">
    <location>
        <position position="308"/>
    </location>
    <ligand>
        <name>Zn(2+)</name>
        <dbReference type="ChEBI" id="CHEBI:29105"/>
        <label>3</label>
    </ligand>
</feature>
<feature type="binding site" evidence="1">
    <location>
        <position position="310"/>
    </location>
    <ligand>
        <name>Zn(2+)</name>
        <dbReference type="ChEBI" id="CHEBI:29105"/>
        <label>3</label>
    </ligand>
</feature>
<feature type="binding site" evidence="1">
    <location>
        <position position="313"/>
    </location>
    <ligand>
        <name>Zn(2+)</name>
        <dbReference type="ChEBI" id="CHEBI:29105"/>
        <label>2</label>
    </ligand>
</feature>
<feature type="binding site" evidence="1">
    <location>
        <position position="316"/>
    </location>
    <ligand>
        <name>Zn(2+)</name>
        <dbReference type="ChEBI" id="CHEBI:29105"/>
        <label>2</label>
    </ligand>
</feature>
<feature type="binding site" evidence="1">
    <location>
        <position position="328"/>
    </location>
    <ligand>
        <name>Zn(2+)</name>
        <dbReference type="ChEBI" id="CHEBI:29105"/>
        <label>3</label>
    </ligand>
</feature>
<feature type="binding site" evidence="1">
    <location>
        <position position="331"/>
    </location>
    <ligand>
        <name>Zn(2+)</name>
        <dbReference type="ChEBI" id="CHEBI:29105"/>
        <label>3</label>
    </ligand>
</feature>
<feature type="binding site" evidence="5">
    <location>
        <position position="358"/>
    </location>
    <ligand>
        <name>Zn(2+)</name>
        <dbReference type="ChEBI" id="CHEBI:29105"/>
        <label>4</label>
    </ligand>
</feature>
<feature type="binding site" evidence="5">
    <location>
        <position position="363"/>
    </location>
    <ligand>
        <name>Zn(2+)</name>
        <dbReference type="ChEBI" id="CHEBI:29105"/>
        <label>4</label>
    </ligand>
</feature>
<feature type="binding site" evidence="5">
    <location>
        <position position="375"/>
    </location>
    <ligand>
        <name>Zn(2+)</name>
        <dbReference type="ChEBI" id="CHEBI:29105"/>
        <label>4</label>
    </ligand>
</feature>
<feature type="binding site" evidence="5">
    <location>
        <position position="379"/>
    </location>
    <ligand>
        <name>Zn(2+)</name>
        <dbReference type="ChEBI" id="CHEBI:29105"/>
        <label>4</label>
    </ligand>
</feature>
<feature type="binding site" evidence="1">
    <location>
        <position position="603"/>
    </location>
    <ligand>
        <name>a divalent metal cation</name>
        <dbReference type="ChEBI" id="CHEBI:60240"/>
        <note>catalytic</note>
    </ligand>
</feature>
<feature type="binding site" evidence="1">
    <location>
        <position position="711"/>
    </location>
    <ligand>
        <name>a divalent metal cation</name>
        <dbReference type="ChEBI" id="CHEBI:60240"/>
        <note>catalytic</note>
    </ligand>
</feature>
<feature type="binding site" evidence="1">
    <location>
        <position position="965"/>
    </location>
    <ligand>
        <name>a divalent metal cation</name>
        <dbReference type="ChEBI" id="CHEBI:60240"/>
        <note>catalytic</note>
    </ligand>
</feature>
<feature type="site" description="Essential for DNA hairpin formation, participates in base-stacking interactions near the cleavage site" evidence="1">
    <location>
        <position position="896"/>
    </location>
</feature>
<feature type="cross-link" description="Glycyl lysine isopeptide (Lys-Gly) (interchain with G-Cter in ubiquitin)" evidence="2">
    <location>
        <position position="234"/>
    </location>
</feature>
<dbReference type="EC" id="3.1.-.-"/>
<dbReference type="EC" id="2.3.2.27"/>
<dbReference type="EMBL" id="AB091392">
    <property type="protein sequence ID" value="BAC54968.1"/>
    <property type="molecule type" value="Genomic_DNA"/>
</dbReference>
<dbReference type="RefSeq" id="NP_001116656.1">
    <property type="nucleotide sequence ID" value="NM_001123184.1"/>
</dbReference>
<dbReference type="SMR" id="Q867B5"/>
<dbReference type="FunCoup" id="Q867B5">
    <property type="interactions" value="183"/>
</dbReference>
<dbReference type="STRING" id="9823.ENSSSCP00000063029"/>
<dbReference type="PaxDb" id="9823-ENSSSCP00000029411"/>
<dbReference type="Ensembl" id="ENSSSCT00035084210.1">
    <property type="protein sequence ID" value="ENSSSCP00035035015.1"/>
    <property type="gene ID" value="ENSSSCG00035062658.1"/>
</dbReference>
<dbReference type="Ensembl" id="ENSSSCT00035084211.1">
    <property type="protein sequence ID" value="ENSSSCP00035035016.1"/>
    <property type="gene ID" value="ENSSSCG00035062658.1"/>
</dbReference>
<dbReference type="GeneID" id="397506"/>
<dbReference type="KEGG" id="ssc:397506"/>
<dbReference type="CTD" id="5896"/>
<dbReference type="eggNOG" id="ENOG502QSFV">
    <property type="taxonomic scope" value="Eukaryota"/>
</dbReference>
<dbReference type="InParanoid" id="Q867B5"/>
<dbReference type="OrthoDB" id="6270329at2759"/>
<dbReference type="Proteomes" id="UP000008227">
    <property type="component" value="Unplaced"/>
</dbReference>
<dbReference type="Proteomes" id="UP000314985">
    <property type="component" value="Unplaced"/>
</dbReference>
<dbReference type="Proteomes" id="UP000694570">
    <property type="component" value="Unplaced"/>
</dbReference>
<dbReference type="Proteomes" id="UP000694571">
    <property type="component" value="Unplaced"/>
</dbReference>
<dbReference type="Proteomes" id="UP000694720">
    <property type="component" value="Unplaced"/>
</dbReference>
<dbReference type="Proteomes" id="UP000694722">
    <property type="component" value="Unplaced"/>
</dbReference>
<dbReference type="Proteomes" id="UP000694723">
    <property type="component" value="Unplaced"/>
</dbReference>
<dbReference type="Proteomes" id="UP000694724">
    <property type="component" value="Unplaced"/>
</dbReference>
<dbReference type="Proteomes" id="UP000694725">
    <property type="component" value="Unplaced"/>
</dbReference>
<dbReference type="Proteomes" id="UP000694726">
    <property type="component" value="Unplaced"/>
</dbReference>
<dbReference type="Proteomes" id="UP000694727">
    <property type="component" value="Unplaced"/>
</dbReference>
<dbReference type="Proteomes" id="UP000694728">
    <property type="component" value="Unplaced"/>
</dbReference>
<dbReference type="GO" id="GO:0097519">
    <property type="term" value="C:DNA recombinase complex"/>
    <property type="evidence" value="ECO:0000318"/>
    <property type="project" value="GO_Central"/>
</dbReference>
<dbReference type="GO" id="GO:1905347">
    <property type="term" value="C:endodeoxyribonuclease complex"/>
    <property type="evidence" value="ECO:0000318"/>
    <property type="project" value="GO_Central"/>
</dbReference>
<dbReference type="GO" id="GO:0005634">
    <property type="term" value="C:nucleus"/>
    <property type="evidence" value="ECO:0000250"/>
    <property type="project" value="UniProtKB"/>
</dbReference>
<dbReference type="GO" id="GO:0004519">
    <property type="term" value="F:endonuclease activity"/>
    <property type="evidence" value="ECO:0000250"/>
    <property type="project" value="UniProtKB"/>
</dbReference>
<dbReference type="GO" id="GO:0042393">
    <property type="term" value="F:histone binding"/>
    <property type="evidence" value="ECO:0000250"/>
    <property type="project" value="UniProtKB"/>
</dbReference>
<dbReference type="GO" id="GO:0046872">
    <property type="term" value="F:metal ion binding"/>
    <property type="evidence" value="ECO:0000250"/>
    <property type="project" value="UniProtKB"/>
</dbReference>
<dbReference type="GO" id="GO:0042803">
    <property type="term" value="F:protein homodimerization activity"/>
    <property type="evidence" value="ECO:0000250"/>
    <property type="project" value="UniProtKB"/>
</dbReference>
<dbReference type="GO" id="GO:0043565">
    <property type="term" value="F:sequence-specific DNA binding"/>
    <property type="evidence" value="ECO:0000250"/>
    <property type="project" value="UniProtKB"/>
</dbReference>
<dbReference type="GO" id="GO:0061630">
    <property type="term" value="F:ubiquitin protein ligase activity"/>
    <property type="evidence" value="ECO:0000318"/>
    <property type="project" value="GO_Central"/>
</dbReference>
<dbReference type="GO" id="GO:0004842">
    <property type="term" value="F:ubiquitin-protein transferase activity"/>
    <property type="evidence" value="ECO:0000250"/>
    <property type="project" value="UniProtKB"/>
</dbReference>
<dbReference type="GO" id="GO:0008270">
    <property type="term" value="F:zinc ion binding"/>
    <property type="evidence" value="ECO:0000250"/>
    <property type="project" value="UniProtKB"/>
</dbReference>
<dbReference type="GO" id="GO:0002250">
    <property type="term" value="P:adaptive immune response"/>
    <property type="evidence" value="ECO:0000318"/>
    <property type="project" value="GO_Central"/>
</dbReference>
<dbReference type="GO" id="GO:0030183">
    <property type="term" value="P:B cell differentiation"/>
    <property type="evidence" value="ECO:0000250"/>
    <property type="project" value="UniProtKB"/>
</dbReference>
<dbReference type="GO" id="GO:0006325">
    <property type="term" value="P:chromatin organization"/>
    <property type="evidence" value="ECO:0007669"/>
    <property type="project" value="UniProtKB-KW"/>
</dbReference>
<dbReference type="GO" id="GO:0002331">
    <property type="term" value="P:pre-B cell allelic exclusion"/>
    <property type="evidence" value="ECO:0000250"/>
    <property type="project" value="UniProtKB"/>
</dbReference>
<dbReference type="GO" id="GO:0051865">
    <property type="term" value="P:protein autoubiquitination"/>
    <property type="evidence" value="ECO:0000250"/>
    <property type="project" value="UniProtKB"/>
</dbReference>
<dbReference type="GO" id="GO:0033077">
    <property type="term" value="P:T cell differentiation in thymus"/>
    <property type="evidence" value="ECO:0000250"/>
    <property type="project" value="UniProtKB"/>
</dbReference>
<dbReference type="GO" id="GO:0033151">
    <property type="term" value="P:V(D)J recombination"/>
    <property type="evidence" value="ECO:0000250"/>
    <property type="project" value="UniProtKB"/>
</dbReference>
<dbReference type="CDD" id="cd16530">
    <property type="entry name" value="RING-HC_RAG1"/>
    <property type="match status" value="1"/>
</dbReference>
<dbReference type="FunFam" id="3.30.160.60:FF:000697">
    <property type="entry name" value="Recombination activating gene 1"/>
    <property type="match status" value="1"/>
</dbReference>
<dbReference type="FunFam" id="3.30.40.10:FF:000142">
    <property type="entry name" value="Recombination activating gene 1"/>
    <property type="match status" value="1"/>
</dbReference>
<dbReference type="Gene3D" id="6.10.140.510">
    <property type="match status" value="1"/>
</dbReference>
<dbReference type="Gene3D" id="3.30.160.60">
    <property type="entry name" value="Classic Zinc Finger"/>
    <property type="match status" value="1"/>
</dbReference>
<dbReference type="Gene3D" id="3.30.40.10">
    <property type="entry name" value="Zinc/RING finger domain, C3HC4 (zinc finger)"/>
    <property type="match status" value="1"/>
</dbReference>
<dbReference type="InterPro" id="IPR024627">
    <property type="entry name" value="RAG1"/>
</dbReference>
<dbReference type="InterPro" id="IPR035714">
    <property type="entry name" value="RAG1_imp-bd"/>
</dbReference>
<dbReference type="InterPro" id="IPR019485">
    <property type="entry name" value="RAG1_Znf"/>
</dbReference>
<dbReference type="InterPro" id="IPR023336">
    <property type="entry name" value="RAG_nonamer-bd_dom"/>
</dbReference>
<dbReference type="InterPro" id="IPR036236">
    <property type="entry name" value="Znf_C2H2_sf"/>
</dbReference>
<dbReference type="InterPro" id="IPR001841">
    <property type="entry name" value="Znf_RING"/>
</dbReference>
<dbReference type="InterPro" id="IPR013083">
    <property type="entry name" value="Znf_RING/FYVE/PHD"/>
</dbReference>
<dbReference type="InterPro" id="IPR017907">
    <property type="entry name" value="Znf_RING_CS"/>
</dbReference>
<dbReference type="PANTHER" id="PTHR11539:SF0">
    <property type="entry name" value="V(D)J RECOMBINATION-ACTIVATING PROTEIN 1"/>
    <property type="match status" value="1"/>
</dbReference>
<dbReference type="PANTHER" id="PTHR11539">
    <property type="entry name" value="VDJ RECOMBINATION ACTIVATING PROTEIN 1 RAG1"/>
    <property type="match status" value="1"/>
</dbReference>
<dbReference type="Pfam" id="PF12940">
    <property type="entry name" value="RAG1"/>
    <property type="match status" value="1"/>
</dbReference>
<dbReference type="Pfam" id="PF12560">
    <property type="entry name" value="RAG1_imp_bd"/>
    <property type="match status" value="1"/>
</dbReference>
<dbReference type="Pfam" id="PF13923">
    <property type="entry name" value="zf-C3HC4_2"/>
    <property type="match status" value="1"/>
</dbReference>
<dbReference type="Pfam" id="PF10426">
    <property type="entry name" value="zf-RAG1"/>
    <property type="match status" value="1"/>
</dbReference>
<dbReference type="SMART" id="SM00184">
    <property type="entry name" value="RING"/>
    <property type="match status" value="1"/>
</dbReference>
<dbReference type="SUPFAM" id="SSF57667">
    <property type="entry name" value="beta-beta-alpha zinc fingers"/>
    <property type="match status" value="1"/>
</dbReference>
<dbReference type="SUPFAM" id="SSF57850">
    <property type="entry name" value="RING/U-box"/>
    <property type="match status" value="1"/>
</dbReference>
<dbReference type="PROSITE" id="PS51487">
    <property type="entry name" value="NBD"/>
    <property type="match status" value="1"/>
</dbReference>
<dbReference type="PROSITE" id="PS51765">
    <property type="entry name" value="ZF_RAG1"/>
    <property type="match status" value="1"/>
</dbReference>
<dbReference type="PROSITE" id="PS00518">
    <property type="entry name" value="ZF_RING_1"/>
    <property type="match status" value="1"/>
</dbReference>
<dbReference type="PROSITE" id="PS50089">
    <property type="entry name" value="ZF_RING_2"/>
    <property type="match status" value="1"/>
</dbReference>
<protein>
    <recommendedName>
        <fullName>V(D)J recombination-activating protein 1</fullName>
        <shortName>RAG-1</shortName>
    </recommendedName>
    <domain>
        <recommendedName>
            <fullName>Endonuclease RAG1</fullName>
            <ecNumber>3.1.-.-</ecNumber>
        </recommendedName>
    </domain>
    <domain>
        <recommendedName>
            <fullName>E3 ubiquitin-protein ligase RAG1</fullName>
            <ecNumber>2.3.2.27</ecNumber>
        </recommendedName>
        <alternativeName>
            <fullName evidence="7">RING-type E3 ubiquitin transferase RAG1</fullName>
        </alternativeName>
    </domain>
</protein>
<name>RAG1_PIG</name>
<keyword id="KW-0156">Chromatin regulator</keyword>
<keyword id="KW-0233">DNA recombination</keyword>
<keyword id="KW-0238">DNA-binding</keyword>
<keyword id="KW-0255">Endonuclease</keyword>
<keyword id="KW-0378">Hydrolase</keyword>
<keyword id="KW-1017">Isopeptide bond</keyword>
<keyword id="KW-0479">Metal-binding</keyword>
<keyword id="KW-0511">Multifunctional enzyme</keyword>
<keyword id="KW-0540">Nuclease</keyword>
<keyword id="KW-0539">Nucleus</keyword>
<keyword id="KW-1185">Reference proteome</keyword>
<keyword id="KW-0808">Transferase</keyword>
<keyword id="KW-0832">Ubl conjugation</keyword>
<keyword id="KW-0833">Ubl conjugation pathway</keyword>
<keyword id="KW-0862">Zinc</keyword>
<keyword id="KW-0863">Zinc-finger</keyword>
<proteinExistence type="inferred from homology"/>
<sequence length="1043" mass="119068">MAVSLPPTLGLSSAPDEIQHPHIKFSEWKFKLFRVRSFEKAPEKAQTEKQDSSEGKPSLEQSPAVLDKPGGQKSALPQPAFKPHPKFLKESHEDGKARDKAIHQANLRRLCRICGNSFNTTGHKRRYPVHGPVDGKTQVLLRKKEKRATSWPDLIAKVFRIDVKADVDSIHPTEFCHNCWSFMHRKFSSTPCEVYSPRNAAMEWHPHTLNCDICHIARRGLKRKSQQPNMQLSKKLKTVIDRARQARQRKRRAQARISSKELMKKIANCGQIHLSPKLLAVDFPAHFVKSISCQICEHILADPVETSCKHVFCRICILRCLKVMGSSCPSCHYPCFPTDLESPVKSFLSILNTLMVKCPAKECNEEISLEKYNHHISSHKESKETFVHINKGGRPRQHLLSLTRRAQKHRLRELKLQVKAFADKEEGGDVKSVCLTLFLLVLRARNEHRQADELEAIMRGQGSGLQPAVCLAIRVNTFLSCSQYHKMYRTVKAITGRQIFQPLHALRNAEKVLLPGYHPFEWQPPLKNVSSSTDVGIIDGLSGLSSSVDDYPVDTIAKRFRYDSALVSALMDMEEDILEGMRAQDLDDYLNGPFTVVVKESCDGMGDVSEKHGSGPVVPEKAVRFSFTVMKITIAHGSQNVKVFEEAKPNSELCCKPLCLMLADESDHETLTAILSPLIAEREAMKSSQLMLEMGGILRTFKFIFRGTGYDEKLVREVEGLEASGSVYICTLCDATRLEASQNLVFHSITRSHAENLERYEVWRSNPYHETVDELRDRVKGVSAKPFIETVPSIDALHCDIGNAAEFYKIFQLEIGEAYKNPHASKEERKRWQATLDKHLRKKMNLKPIMRMNGNFARKLMTKETVEAVCELIPSEERHEALRELMDLYLKMKPVWRSSCPAKECPESLCQYSFNSQRFAELLSTKFKYRYEGKITNYFHKTLAHVPEIIERDGSIGAWASEGNESGNKLFRRFRKMNARQSKYYEMEDVLKHHWLYTSKYLQKFMNAHKAFKNSGFTINLQRSSGDTLDLENSPESQDLMEF</sequence>
<organism>
    <name type="scientific">Sus scrofa</name>
    <name type="common">Pig</name>
    <dbReference type="NCBI Taxonomy" id="9823"/>
    <lineage>
        <taxon>Eukaryota</taxon>
        <taxon>Metazoa</taxon>
        <taxon>Chordata</taxon>
        <taxon>Craniata</taxon>
        <taxon>Vertebrata</taxon>
        <taxon>Euteleostomi</taxon>
        <taxon>Mammalia</taxon>
        <taxon>Eutheria</taxon>
        <taxon>Laurasiatheria</taxon>
        <taxon>Artiodactyla</taxon>
        <taxon>Suina</taxon>
        <taxon>Suidae</taxon>
        <taxon>Sus</taxon>
    </lineage>
</organism>
<gene>
    <name type="primary">RAG1</name>
</gene>
<reference key="1">
    <citation type="submission" date="2002-09" db="EMBL/GenBank/DDBJ databases">
        <title>Porcine RAG-1 gene promoter and coding region.</title>
        <authorList>
            <person name="Hatsuse H."/>
            <person name="Homma D."/>
            <person name="Hiraiwa H."/>
            <person name="Yasue H."/>
            <person name="Takagaki Y."/>
        </authorList>
    </citation>
    <scope>NUCLEOTIDE SEQUENCE [GENOMIC DNA]</scope>
    <source>
        <strain>Large white</strain>
        <tissue>Liver</tissue>
    </source>
</reference>
<evidence type="ECO:0000250" key="1"/>
<evidence type="ECO:0000250" key="2">
    <source>
        <dbReference type="UniProtKB" id="P15919"/>
    </source>
</evidence>
<evidence type="ECO:0000255" key="3">
    <source>
        <dbReference type="PROSITE-ProRule" id="PRU00175"/>
    </source>
</evidence>
<evidence type="ECO:0000255" key="4">
    <source>
        <dbReference type="PROSITE-ProRule" id="PRU00820"/>
    </source>
</evidence>
<evidence type="ECO:0000255" key="5">
    <source>
        <dbReference type="PROSITE-ProRule" id="PRU01101"/>
    </source>
</evidence>
<evidence type="ECO:0000256" key="6">
    <source>
        <dbReference type="SAM" id="MobiDB-lite"/>
    </source>
</evidence>
<evidence type="ECO:0000305" key="7"/>
<accession>Q867B5</accession>